<comment type="catalytic activity">
    <reaction evidence="1">
        <text>2 reduced [2Fe-2S]-[ferredoxin] + NADP(+) + H(+) = 2 oxidized [2Fe-2S]-[ferredoxin] + NADPH</text>
        <dbReference type="Rhea" id="RHEA:20125"/>
        <dbReference type="Rhea" id="RHEA-COMP:10000"/>
        <dbReference type="Rhea" id="RHEA-COMP:10001"/>
        <dbReference type="ChEBI" id="CHEBI:15378"/>
        <dbReference type="ChEBI" id="CHEBI:33737"/>
        <dbReference type="ChEBI" id="CHEBI:33738"/>
        <dbReference type="ChEBI" id="CHEBI:57783"/>
        <dbReference type="ChEBI" id="CHEBI:58349"/>
        <dbReference type="EC" id="1.18.1.2"/>
    </reaction>
</comment>
<comment type="cofactor">
    <cofactor evidence="1">
        <name>FAD</name>
        <dbReference type="ChEBI" id="CHEBI:57692"/>
    </cofactor>
    <text evidence="1">Binds 1 FAD per subunit.</text>
</comment>
<comment type="subunit">
    <text evidence="1">Homodimer.</text>
</comment>
<comment type="similarity">
    <text evidence="1">Belongs to the ferredoxin--NADP reductase type 2 family.</text>
</comment>
<feature type="chain" id="PRO_0000364839" description="Ferredoxin--NADP reductase">
    <location>
        <begin position="1"/>
        <end position="321"/>
    </location>
</feature>
<feature type="binding site" evidence="1">
    <location>
        <position position="28"/>
    </location>
    <ligand>
        <name>FAD</name>
        <dbReference type="ChEBI" id="CHEBI:57692"/>
    </ligand>
</feature>
<feature type="binding site" evidence="1">
    <location>
        <position position="36"/>
    </location>
    <ligand>
        <name>FAD</name>
        <dbReference type="ChEBI" id="CHEBI:57692"/>
    </ligand>
</feature>
<feature type="binding site" evidence="1">
    <location>
        <position position="41"/>
    </location>
    <ligand>
        <name>FAD</name>
        <dbReference type="ChEBI" id="CHEBI:57692"/>
    </ligand>
</feature>
<feature type="binding site" evidence="1">
    <location>
        <position position="81"/>
    </location>
    <ligand>
        <name>FAD</name>
        <dbReference type="ChEBI" id="CHEBI:57692"/>
    </ligand>
</feature>
<feature type="binding site" evidence="1">
    <location>
        <position position="115"/>
    </location>
    <ligand>
        <name>FAD</name>
        <dbReference type="ChEBI" id="CHEBI:57692"/>
    </ligand>
</feature>
<feature type="binding site" evidence="1">
    <location>
        <position position="274"/>
    </location>
    <ligand>
        <name>FAD</name>
        <dbReference type="ChEBI" id="CHEBI:57692"/>
    </ligand>
</feature>
<feature type="binding site" evidence="1">
    <location>
        <position position="315"/>
    </location>
    <ligand>
        <name>FAD</name>
        <dbReference type="ChEBI" id="CHEBI:57692"/>
    </ligand>
</feature>
<keyword id="KW-0274">FAD</keyword>
<keyword id="KW-0285">Flavoprotein</keyword>
<keyword id="KW-0521">NADP</keyword>
<keyword id="KW-0560">Oxidoreductase</keyword>
<keyword id="KW-1185">Reference proteome</keyword>
<sequence>MLIVGAGPAGLYGAYYAGFRGMSVALMDSLPEAGGQVTAMYPEKVIYDIAGLPAVRGRELIDALLIQANQFSPTYLLGQQAAELAHKPDAVVVTSSQGLRVRAKVVVITGGLGTFAPRPLPTGTAHLGRGLVYFVPKLDVHTGQDVIVVGGGDSAFDWALALEPIARSVTLVHRRDRFRAHMSTVERVEASSVEILTFTEVAMVHGEEWIEKVELVQTRTGDRHVRPAQAVVAALGFTADLGPLTRWNLTIDKRHIVVDPTMATGVERIFAAGDITEYPGKVRLIATGFGEAATAVNNAAPLVDPSAKIFPGHSSDDGTGG</sequence>
<organism>
    <name type="scientific">Frankia casuarinae (strain DSM 45818 / CECT 9043 / HFP020203 / CcI3)</name>
    <dbReference type="NCBI Taxonomy" id="106370"/>
    <lineage>
        <taxon>Bacteria</taxon>
        <taxon>Bacillati</taxon>
        <taxon>Actinomycetota</taxon>
        <taxon>Actinomycetes</taxon>
        <taxon>Frankiales</taxon>
        <taxon>Frankiaceae</taxon>
        <taxon>Frankia</taxon>
    </lineage>
</organism>
<dbReference type="EC" id="1.18.1.2" evidence="1"/>
<dbReference type="EMBL" id="CP000249">
    <property type="protein sequence ID" value="ABD09914.1"/>
    <property type="molecule type" value="Genomic_DNA"/>
</dbReference>
<dbReference type="RefSeq" id="WP_011434990.1">
    <property type="nucleotide sequence ID" value="NC_007777.1"/>
</dbReference>
<dbReference type="SMR" id="Q2JFM8"/>
<dbReference type="STRING" id="106370.Francci3_0530"/>
<dbReference type="KEGG" id="fra:Francci3_0530"/>
<dbReference type="eggNOG" id="COG0492">
    <property type="taxonomic scope" value="Bacteria"/>
</dbReference>
<dbReference type="HOGENOM" id="CLU_031864_5_5_11"/>
<dbReference type="OrthoDB" id="9806179at2"/>
<dbReference type="PhylomeDB" id="Q2JFM8"/>
<dbReference type="Proteomes" id="UP000001937">
    <property type="component" value="Chromosome"/>
</dbReference>
<dbReference type="GO" id="GO:0004324">
    <property type="term" value="F:ferredoxin-NADP+ reductase activity"/>
    <property type="evidence" value="ECO:0007669"/>
    <property type="project" value="UniProtKB-UniRule"/>
</dbReference>
<dbReference type="GO" id="GO:0050660">
    <property type="term" value="F:flavin adenine dinucleotide binding"/>
    <property type="evidence" value="ECO:0007669"/>
    <property type="project" value="UniProtKB-UniRule"/>
</dbReference>
<dbReference type="GO" id="GO:0050661">
    <property type="term" value="F:NADP binding"/>
    <property type="evidence" value="ECO:0007669"/>
    <property type="project" value="UniProtKB-UniRule"/>
</dbReference>
<dbReference type="Gene3D" id="3.50.50.60">
    <property type="entry name" value="FAD/NAD(P)-binding domain"/>
    <property type="match status" value="2"/>
</dbReference>
<dbReference type="HAMAP" id="MF_01685">
    <property type="entry name" value="FENR2"/>
    <property type="match status" value="1"/>
</dbReference>
<dbReference type="InterPro" id="IPR036188">
    <property type="entry name" value="FAD/NAD-bd_sf"/>
</dbReference>
<dbReference type="InterPro" id="IPR023753">
    <property type="entry name" value="FAD/NAD-binding_dom"/>
</dbReference>
<dbReference type="InterPro" id="IPR022890">
    <property type="entry name" value="Fd--NADP_Rdtase_type_2"/>
</dbReference>
<dbReference type="InterPro" id="IPR050097">
    <property type="entry name" value="Ferredoxin-NADP_redctase_2"/>
</dbReference>
<dbReference type="PANTHER" id="PTHR48105">
    <property type="entry name" value="THIOREDOXIN REDUCTASE 1-RELATED-RELATED"/>
    <property type="match status" value="1"/>
</dbReference>
<dbReference type="Pfam" id="PF07992">
    <property type="entry name" value="Pyr_redox_2"/>
    <property type="match status" value="1"/>
</dbReference>
<dbReference type="PRINTS" id="PR00368">
    <property type="entry name" value="FADPNR"/>
</dbReference>
<dbReference type="PRINTS" id="PR00469">
    <property type="entry name" value="PNDRDTASEII"/>
</dbReference>
<dbReference type="SUPFAM" id="SSF51905">
    <property type="entry name" value="FAD/NAD(P)-binding domain"/>
    <property type="match status" value="1"/>
</dbReference>
<accession>Q2JFM8</accession>
<name>FENR_FRACC</name>
<protein>
    <recommendedName>
        <fullName evidence="1">Ferredoxin--NADP reductase</fullName>
        <shortName evidence="1">FNR</shortName>
        <shortName evidence="1">Fd-NADP(+) reductase</shortName>
        <ecNumber evidence="1">1.18.1.2</ecNumber>
    </recommendedName>
</protein>
<evidence type="ECO:0000255" key="1">
    <source>
        <dbReference type="HAMAP-Rule" id="MF_01685"/>
    </source>
</evidence>
<proteinExistence type="inferred from homology"/>
<gene>
    <name type="ordered locus">Francci3_0530</name>
</gene>
<reference key="1">
    <citation type="journal article" date="2007" name="Genome Res.">
        <title>Genome characteristics of facultatively symbiotic Frankia sp. strains reflect host range and host plant biogeography.</title>
        <authorList>
            <person name="Normand P."/>
            <person name="Lapierre P."/>
            <person name="Tisa L.S."/>
            <person name="Gogarten J.P."/>
            <person name="Alloisio N."/>
            <person name="Bagnarol E."/>
            <person name="Bassi C.A."/>
            <person name="Berry A.M."/>
            <person name="Bickhart D.M."/>
            <person name="Choisne N."/>
            <person name="Couloux A."/>
            <person name="Cournoyer B."/>
            <person name="Cruveiller S."/>
            <person name="Daubin V."/>
            <person name="Demange N."/>
            <person name="Francino M.P."/>
            <person name="Goltsman E."/>
            <person name="Huang Y."/>
            <person name="Kopp O.R."/>
            <person name="Labarre L."/>
            <person name="Lapidus A."/>
            <person name="Lavire C."/>
            <person name="Marechal J."/>
            <person name="Martinez M."/>
            <person name="Mastronunzio J.E."/>
            <person name="Mullin B.C."/>
            <person name="Niemann J."/>
            <person name="Pujic P."/>
            <person name="Rawnsley T."/>
            <person name="Rouy Z."/>
            <person name="Schenowitz C."/>
            <person name="Sellstedt A."/>
            <person name="Tavares F."/>
            <person name="Tomkins J.P."/>
            <person name="Vallenet D."/>
            <person name="Valverde C."/>
            <person name="Wall L.G."/>
            <person name="Wang Y."/>
            <person name="Medigue C."/>
            <person name="Benson D.R."/>
        </authorList>
    </citation>
    <scope>NUCLEOTIDE SEQUENCE [LARGE SCALE GENOMIC DNA]</scope>
    <source>
        <strain>DSM 45818 / CECT 9043 / HFP020203 / CcI3</strain>
    </source>
</reference>